<sequence>MLKVLMPTIMLILTTWLTKPAWLWPTMTTNSLLVATISLTWLKWDSESGWKSLNSSMATDPLSTPLLILTCWLLPLMILASQNHMFMEPLNRQRSFISLLISLQTFLIMAFGATEIILFYIMFEATLIPTLIIITRWGNQTERLNAGTYFLFYTVMGSLPLLVALLMTQNNLGTLSMPLIQHMYQMKLHTHGDMMWWTACLLAFLVKMPLYGVHLWLPKAHVEAPIAGSMVLAAVLLKLGGYGMMRLIMMLAPMTKTLAYPFIILALWGIIMTGSICLRQTDLKSLIAYSSVGHMGLVAAGILTQTPWGFTGATVLMIAHGLTSSALFCLANTNYERTHSRTMILARGMQVILPLMTFWWLMMNLANLALPPSTNLMGELLIITMTFNWSNWTLTMTGLGMLITAIYSLHMFLTTQRGLMTNHIISIEPSHTREHLLMTMHALPMLLLILKPELIWGWSYX</sequence>
<comment type="function">
    <text evidence="1">Core subunit of the mitochondrial membrane respiratory chain NADH dehydrogenase (Complex I) that is believed to belong to the minimal assembly required for catalysis. Complex I functions in the transfer of electrons from NADH to the respiratory chain. The immediate electron acceptor for the enzyme is believed to be ubiquinone (By similarity).</text>
</comment>
<comment type="catalytic activity">
    <reaction>
        <text>a ubiquinone + NADH + 5 H(+)(in) = a ubiquinol + NAD(+) + 4 H(+)(out)</text>
        <dbReference type="Rhea" id="RHEA:29091"/>
        <dbReference type="Rhea" id="RHEA-COMP:9565"/>
        <dbReference type="Rhea" id="RHEA-COMP:9566"/>
        <dbReference type="ChEBI" id="CHEBI:15378"/>
        <dbReference type="ChEBI" id="CHEBI:16389"/>
        <dbReference type="ChEBI" id="CHEBI:17976"/>
        <dbReference type="ChEBI" id="CHEBI:57540"/>
        <dbReference type="ChEBI" id="CHEBI:57945"/>
        <dbReference type="EC" id="7.1.1.2"/>
    </reaction>
</comment>
<comment type="subcellular location">
    <subcellularLocation>
        <location evidence="1">Mitochondrion membrane</location>
        <topology evidence="1">Multi-pass membrane protein</topology>
    </subcellularLocation>
</comment>
<comment type="similarity">
    <text evidence="3">Belongs to the complex I subunit 4 family.</text>
</comment>
<evidence type="ECO:0000250" key="1"/>
<evidence type="ECO:0000255" key="2"/>
<evidence type="ECO:0000305" key="3"/>
<proteinExistence type="inferred from homology"/>
<gene>
    <name type="primary">MT-ND4</name>
    <name type="synonym">MTND4</name>
    <name type="synonym">NADH4</name>
    <name type="synonym">ND4</name>
</gene>
<feature type="chain" id="PRO_0000117946" description="NADH-ubiquinone oxidoreductase chain 4">
    <location>
        <begin position="1"/>
        <end position="461"/>
    </location>
</feature>
<feature type="transmembrane region" description="Helical" evidence="2">
    <location>
        <begin position="20"/>
        <end position="42"/>
    </location>
</feature>
<feature type="transmembrane region" description="Helical" evidence="2">
    <location>
        <begin position="61"/>
        <end position="81"/>
    </location>
</feature>
<feature type="transmembrane region" description="Helical" evidence="2">
    <location>
        <begin position="93"/>
        <end position="113"/>
    </location>
</feature>
<feature type="transmembrane region" description="Helical" evidence="2">
    <location>
        <begin position="114"/>
        <end position="134"/>
    </location>
</feature>
<feature type="transmembrane region" description="Helical" evidence="2">
    <location>
        <begin position="147"/>
        <end position="167"/>
    </location>
</feature>
<feature type="transmembrane region" description="Helical" evidence="2">
    <location>
        <begin position="197"/>
        <end position="217"/>
    </location>
</feature>
<feature type="transmembrane region" description="Helical" evidence="2">
    <location>
        <begin position="225"/>
        <end position="245"/>
    </location>
</feature>
<feature type="transmembrane region" description="Helical" evidence="2">
    <location>
        <begin position="258"/>
        <end position="278"/>
    </location>
</feature>
<feature type="transmembrane region" description="Helical" evidence="2">
    <location>
        <begin position="285"/>
        <end position="304"/>
    </location>
</feature>
<feature type="transmembrane region" description="Helical" evidence="2">
    <location>
        <begin position="309"/>
        <end position="331"/>
    </location>
</feature>
<feature type="transmembrane region" description="Helical" evidence="2">
    <location>
        <begin position="351"/>
        <end position="371"/>
    </location>
</feature>
<feature type="transmembrane region" description="Helical" evidence="2">
    <location>
        <begin position="393"/>
        <end position="413"/>
    </location>
</feature>
<feature type="transmembrane region" description="Helical" evidence="2">
    <location>
        <begin position="436"/>
        <end position="456"/>
    </location>
</feature>
<dbReference type="EC" id="7.1.1.2"/>
<dbReference type="EMBL" id="U82228">
    <property type="protein sequence ID" value="AAC60327.1"/>
    <property type="molecule type" value="Genomic_DNA"/>
</dbReference>
<dbReference type="PIR" id="B58893">
    <property type="entry name" value="B58893"/>
</dbReference>
<dbReference type="RefSeq" id="NP_008338.1">
    <property type="nucleotide sequence ID" value="NC_001804.1"/>
</dbReference>
<dbReference type="FunCoup" id="O03173">
    <property type="interactions" value="208"/>
</dbReference>
<dbReference type="STRING" id="7897.ENSLACP00000021814"/>
<dbReference type="GeneID" id="808092"/>
<dbReference type="KEGG" id="lcm:808092"/>
<dbReference type="CTD" id="4538"/>
<dbReference type="eggNOG" id="KOG4845">
    <property type="taxonomic scope" value="Eukaryota"/>
</dbReference>
<dbReference type="InParanoid" id="O03173"/>
<dbReference type="OrthoDB" id="564260at2759"/>
<dbReference type="TreeFam" id="TF343520"/>
<dbReference type="Proteomes" id="UP000008672">
    <property type="component" value="Mitochondrion"/>
</dbReference>
<dbReference type="GO" id="GO:0031966">
    <property type="term" value="C:mitochondrial membrane"/>
    <property type="evidence" value="ECO:0007669"/>
    <property type="project" value="UniProtKB-SubCell"/>
</dbReference>
<dbReference type="GO" id="GO:0008137">
    <property type="term" value="F:NADH dehydrogenase (ubiquinone) activity"/>
    <property type="evidence" value="ECO:0007669"/>
    <property type="project" value="UniProtKB-EC"/>
</dbReference>
<dbReference type="GO" id="GO:0048039">
    <property type="term" value="F:ubiquinone binding"/>
    <property type="evidence" value="ECO:0007669"/>
    <property type="project" value="TreeGrafter"/>
</dbReference>
<dbReference type="GO" id="GO:0042773">
    <property type="term" value="P:ATP synthesis coupled electron transport"/>
    <property type="evidence" value="ECO:0007669"/>
    <property type="project" value="InterPro"/>
</dbReference>
<dbReference type="GO" id="GO:0015990">
    <property type="term" value="P:electron transport coupled proton transport"/>
    <property type="evidence" value="ECO:0007669"/>
    <property type="project" value="TreeGrafter"/>
</dbReference>
<dbReference type="InterPro" id="IPR000260">
    <property type="entry name" value="NADH4_N"/>
</dbReference>
<dbReference type="InterPro" id="IPR010227">
    <property type="entry name" value="NADH_Q_OxRdtase_chainM/4"/>
</dbReference>
<dbReference type="InterPro" id="IPR003918">
    <property type="entry name" value="NADH_UbQ_OxRdtase"/>
</dbReference>
<dbReference type="InterPro" id="IPR001750">
    <property type="entry name" value="ND/Mrp_TM"/>
</dbReference>
<dbReference type="NCBIfam" id="TIGR01972">
    <property type="entry name" value="NDH_I_M"/>
    <property type="match status" value="1"/>
</dbReference>
<dbReference type="PANTHER" id="PTHR43507">
    <property type="entry name" value="NADH-UBIQUINONE OXIDOREDUCTASE CHAIN 4"/>
    <property type="match status" value="1"/>
</dbReference>
<dbReference type="PANTHER" id="PTHR43507:SF20">
    <property type="entry name" value="NADH-UBIQUINONE OXIDOREDUCTASE CHAIN 4"/>
    <property type="match status" value="1"/>
</dbReference>
<dbReference type="Pfam" id="PF01059">
    <property type="entry name" value="Oxidored_q5_N"/>
    <property type="match status" value="1"/>
</dbReference>
<dbReference type="Pfam" id="PF00361">
    <property type="entry name" value="Proton_antipo_M"/>
    <property type="match status" value="1"/>
</dbReference>
<dbReference type="PRINTS" id="PR01437">
    <property type="entry name" value="NUOXDRDTASE4"/>
</dbReference>
<protein>
    <recommendedName>
        <fullName>NADH-ubiquinone oxidoreductase chain 4</fullName>
        <ecNumber>7.1.1.2</ecNumber>
    </recommendedName>
    <alternativeName>
        <fullName>NADH dehydrogenase subunit 4</fullName>
    </alternativeName>
</protein>
<name>NU4M_LATCH</name>
<reference key="1">
    <citation type="journal article" date="1997" name="Genetics">
        <title>The complete DNA sequence of the mitochondrial genome of a 'living fossil,' the coelacanth (Latimeria chalumnae).</title>
        <authorList>
            <person name="Zardoya R."/>
            <person name="Meyer A."/>
        </authorList>
    </citation>
    <scope>NUCLEOTIDE SEQUENCE [LARGE SCALE GENOMIC DNA]</scope>
</reference>
<organism>
    <name type="scientific">Latimeria chalumnae</name>
    <name type="common">Coelacanth</name>
    <dbReference type="NCBI Taxonomy" id="7897"/>
    <lineage>
        <taxon>Eukaryota</taxon>
        <taxon>Metazoa</taxon>
        <taxon>Chordata</taxon>
        <taxon>Craniata</taxon>
        <taxon>Vertebrata</taxon>
        <taxon>Euteleostomi</taxon>
        <taxon>Coelacanthiformes</taxon>
        <taxon>Coelacanthidae</taxon>
        <taxon>Latimeria</taxon>
    </lineage>
</organism>
<geneLocation type="mitochondrion"/>
<keyword id="KW-0249">Electron transport</keyword>
<keyword id="KW-0472">Membrane</keyword>
<keyword id="KW-0496">Mitochondrion</keyword>
<keyword id="KW-0520">NAD</keyword>
<keyword id="KW-1185">Reference proteome</keyword>
<keyword id="KW-0679">Respiratory chain</keyword>
<keyword id="KW-1278">Translocase</keyword>
<keyword id="KW-0812">Transmembrane</keyword>
<keyword id="KW-1133">Transmembrane helix</keyword>
<keyword id="KW-0813">Transport</keyword>
<keyword id="KW-0830">Ubiquinone</keyword>
<accession>O03173</accession>